<gene>
    <name evidence="1" type="primary">rplI</name>
    <name type="ordered locus">CMS3096</name>
</gene>
<proteinExistence type="inferred from homology"/>
<feature type="chain" id="PRO_1000081470" description="Large ribosomal subunit protein bL9">
    <location>
        <begin position="1"/>
        <end position="150"/>
    </location>
</feature>
<comment type="function">
    <text evidence="1">Binds to the 23S rRNA.</text>
</comment>
<comment type="similarity">
    <text evidence="1">Belongs to the bacterial ribosomal protein bL9 family.</text>
</comment>
<sequence length="150" mass="16087">MSKVILTTEVSGLGSPGDVVEVKNGFSRNYLVPQGFAVIWSRGGEKQIEQIKAARAAREHATIEEAQDLKSRLEAKIVKLTVKAGQGGRLFGSVKTSDIAKAVEESGIGQVDKRKIEIPNPIKGTGNHEATIRLRDDIVATISLQVVAAK</sequence>
<dbReference type="EMBL" id="AM849034">
    <property type="protein sequence ID" value="CAQ03164.1"/>
    <property type="molecule type" value="Genomic_DNA"/>
</dbReference>
<dbReference type="RefSeq" id="WP_012300302.1">
    <property type="nucleotide sequence ID" value="NZ_MZMN01000003.1"/>
</dbReference>
<dbReference type="SMR" id="B0RDN5"/>
<dbReference type="STRING" id="31964.CMS3096"/>
<dbReference type="KEGG" id="cms:CMS3096"/>
<dbReference type="eggNOG" id="COG0359">
    <property type="taxonomic scope" value="Bacteria"/>
</dbReference>
<dbReference type="HOGENOM" id="CLU_078938_5_1_11"/>
<dbReference type="OrthoDB" id="9788336at2"/>
<dbReference type="Proteomes" id="UP000001318">
    <property type="component" value="Chromosome"/>
</dbReference>
<dbReference type="GO" id="GO:1990904">
    <property type="term" value="C:ribonucleoprotein complex"/>
    <property type="evidence" value="ECO:0007669"/>
    <property type="project" value="UniProtKB-KW"/>
</dbReference>
<dbReference type="GO" id="GO:0005840">
    <property type="term" value="C:ribosome"/>
    <property type="evidence" value="ECO:0007669"/>
    <property type="project" value="UniProtKB-KW"/>
</dbReference>
<dbReference type="GO" id="GO:0019843">
    <property type="term" value="F:rRNA binding"/>
    <property type="evidence" value="ECO:0007669"/>
    <property type="project" value="UniProtKB-UniRule"/>
</dbReference>
<dbReference type="GO" id="GO:0003735">
    <property type="term" value="F:structural constituent of ribosome"/>
    <property type="evidence" value="ECO:0007669"/>
    <property type="project" value="InterPro"/>
</dbReference>
<dbReference type="GO" id="GO:0006412">
    <property type="term" value="P:translation"/>
    <property type="evidence" value="ECO:0007669"/>
    <property type="project" value="UniProtKB-UniRule"/>
</dbReference>
<dbReference type="FunFam" id="3.40.5.10:FF:000003">
    <property type="entry name" value="50S ribosomal protein L9"/>
    <property type="match status" value="1"/>
</dbReference>
<dbReference type="Gene3D" id="3.10.430.100">
    <property type="entry name" value="Ribosomal protein L9, C-terminal domain"/>
    <property type="match status" value="1"/>
</dbReference>
<dbReference type="Gene3D" id="3.40.5.10">
    <property type="entry name" value="Ribosomal protein L9, N-terminal domain"/>
    <property type="match status" value="1"/>
</dbReference>
<dbReference type="HAMAP" id="MF_00503">
    <property type="entry name" value="Ribosomal_bL9"/>
    <property type="match status" value="1"/>
</dbReference>
<dbReference type="InterPro" id="IPR000244">
    <property type="entry name" value="Ribosomal_bL9"/>
</dbReference>
<dbReference type="InterPro" id="IPR009027">
    <property type="entry name" value="Ribosomal_bL9/RNase_H1_N"/>
</dbReference>
<dbReference type="InterPro" id="IPR020594">
    <property type="entry name" value="Ribosomal_bL9_bac/chp"/>
</dbReference>
<dbReference type="InterPro" id="IPR020069">
    <property type="entry name" value="Ribosomal_bL9_C"/>
</dbReference>
<dbReference type="InterPro" id="IPR036791">
    <property type="entry name" value="Ribosomal_bL9_C_sf"/>
</dbReference>
<dbReference type="InterPro" id="IPR020070">
    <property type="entry name" value="Ribosomal_bL9_N"/>
</dbReference>
<dbReference type="InterPro" id="IPR036935">
    <property type="entry name" value="Ribosomal_bL9_N_sf"/>
</dbReference>
<dbReference type="NCBIfam" id="TIGR00158">
    <property type="entry name" value="L9"/>
    <property type="match status" value="1"/>
</dbReference>
<dbReference type="PANTHER" id="PTHR21368">
    <property type="entry name" value="50S RIBOSOMAL PROTEIN L9"/>
    <property type="match status" value="1"/>
</dbReference>
<dbReference type="Pfam" id="PF03948">
    <property type="entry name" value="Ribosomal_L9_C"/>
    <property type="match status" value="1"/>
</dbReference>
<dbReference type="Pfam" id="PF01281">
    <property type="entry name" value="Ribosomal_L9_N"/>
    <property type="match status" value="1"/>
</dbReference>
<dbReference type="SUPFAM" id="SSF55658">
    <property type="entry name" value="L9 N-domain-like"/>
    <property type="match status" value="1"/>
</dbReference>
<dbReference type="SUPFAM" id="SSF55653">
    <property type="entry name" value="Ribosomal protein L9 C-domain"/>
    <property type="match status" value="1"/>
</dbReference>
<dbReference type="PROSITE" id="PS00651">
    <property type="entry name" value="RIBOSOMAL_L9"/>
    <property type="match status" value="1"/>
</dbReference>
<protein>
    <recommendedName>
        <fullName evidence="1">Large ribosomal subunit protein bL9</fullName>
    </recommendedName>
    <alternativeName>
        <fullName evidence="2">50S ribosomal protein L9</fullName>
    </alternativeName>
</protein>
<reference key="1">
    <citation type="journal article" date="2008" name="J. Bacteriol.">
        <title>Genome of the actinomycete plant pathogen Clavibacter michiganensis subsp. sepedonicus suggests recent niche adaptation.</title>
        <authorList>
            <person name="Bentley S.D."/>
            <person name="Corton C."/>
            <person name="Brown S.E."/>
            <person name="Barron A."/>
            <person name="Clark L."/>
            <person name="Doggett J."/>
            <person name="Harris B."/>
            <person name="Ormond D."/>
            <person name="Quail M.A."/>
            <person name="May G."/>
            <person name="Francis D."/>
            <person name="Knudson D."/>
            <person name="Parkhill J."/>
            <person name="Ishimaru C.A."/>
        </authorList>
    </citation>
    <scope>NUCLEOTIDE SEQUENCE [LARGE SCALE GENOMIC DNA]</scope>
    <source>
        <strain>ATCC 33113 / DSM 20744 / JCM 9667 / LMG 2889 / ICMP 2535 / C-1</strain>
    </source>
</reference>
<keyword id="KW-0687">Ribonucleoprotein</keyword>
<keyword id="KW-0689">Ribosomal protein</keyword>
<keyword id="KW-0694">RNA-binding</keyword>
<keyword id="KW-0699">rRNA-binding</keyword>
<evidence type="ECO:0000255" key="1">
    <source>
        <dbReference type="HAMAP-Rule" id="MF_00503"/>
    </source>
</evidence>
<evidence type="ECO:0000305" key="2"/>
<name>RL9_CLASE</name>
<accession>B0RDN5</accession>
<organism>
    <name type="scientific">Clavibacter sepedonicus</name>
    <name type="common">Clavibacter michiganensis subsp. sepedonicus</name>
    <dbReference type="NCBI Taxonomy" id="31964"/>
    <lineage>
        <taxon>Bacteria</taxon>
        <taxon>Bacillati</taxon>
        <taxon>Actinomycetota</taxon>
        <taxon>Actinomycetes</taxon>
        <taxon>Micrococcales</taxon>
        <taxon>Microbacteriaceae</taxon>
        <taxon>Clavibacter</taxon>
    </lineage>
</organism>